<reference key="1">
    <citation type="submission" date="2007-02" db="EMBL/GenBank/DDBJ databases">
        <title>Complete sequence of Clostridium thermocellum ATCC 27405.</title>
        <authorList>
            <consortium name="US DOE Joint Genome Institute"/>
            <person name="Copeland A."/>
            <person name="Lucas S."/>
            <person name="Lapidus A."/>
            <person name="Barry K."/>
            <person name="Detter J.C."/>
            <person name="Glavina del Rio T."/>
            <person name="Hammon N."/>
            <person name="Israni S."/>
            <person name="Dalin E."/>
            <person name="Tice H."/>
            <person name="Pitluck S."/>
            <person name="Chertkov O."/>
            <person name="Brettin T."/>
            <person name="Bruce D."/>
            <person name="Han C."/>
            <person name="Tapia R."/>
            <person name="Gilna P."/>
            <person name="Schmutz J."/>
            <person name="Larimer F."/>
            <person name="Land M."/>
            <person name="Hauser L."/>
            <person name="Kyrpides N."/>
            <person name="Mikhailova N."/>
            <person name="Wu J.H.D."/>
            <person name="Newcomb M."/>
            <person name="Richardson P."/>
        </authorList>
    </citation>
    <scope>NUCLEOTIDE SEQUENCE [LARGE SCALE GENOMIC DNA]</scope>
    <source>
        <strain>ATCC 27405 / DSM 1237 / JCM 9322 / NBRC 103400 / NCIMB 10682 / NRRL B-4536 / VPI 7372</strain>
    </source>
</reference>
<protein>
    <recommendedName>
        <fullName evidence="1">Chaperone protein DnaJ</fullName>
    </recommendedName>
</protein>
<name>DNAJ_ACET2</name>
<keyword id="KW-0143">Chaperone</keyword>
<keyword id="KW-0963">Cytoplasm</keyword>
<keyword id="KW-0235">DNA replication</keyword>
<keyword id="KW-0479">Metal-binding</keyword>
<keyword id="KW-1185">Reference proteome</keyword>
<keyword id="KW-0677">Repeat</keyword>
<keyword id="KW-0346">Stress response</keyword>
<keyword id="KW-0862">Zinc</keyword>
<keyword id="KW-0863">Zinc-finger</keyword>
<organism>
    <name type="scientific">Acetivibrio thermocellus (strain ATCC 27405 / DSM 1237 / JCM 9322 / NBRC 103400 / NCIMB 10682 / NRRL B-4536 / VPI 7372)</name>
    <name type="common">Clostridium thermocellum</name>
    <dbReference type="NCBI Taxonomy" id="203119"/>
    <lineage>
        <taxon>Bacteria</taxon>
        <taxon>Bacillati</taxon>
        <taxon>Bacillota</taxon>
        <taxon>Clostridia</taxon>
        <taxon>Eubacteriales</taxon>
        <taxon>Oscillospiraceae</taxon>
        <taxon>Acetivibrio</taxon>
    </lineage>
</organism>
<proteinExistence type="inferred from homology"/>
<dbReference type="EMBL" id="CP000568">
    <property type="protein sequence ID" value="ABN52553.1"/>
    <property type="molecule type" value="Genomic_DNA"/>
</dbReference>
<dbReference type="RefSeq" id="WP_003517016.1">
    <property type="nucleotide sequence ID" value="NC_009012.1"/>
</dbReference>
<dbReference type="SMR" id="A3DF24"/>
<dbReference type="STRING" id="203119.Cthe_1321"/>
<dbReference type="GeneID" id="35804632"/>
<dbReference type="KEGG" id="cth:Cthe_1321"/>
<dbReference type="eggNOG" id="COG0484">
    <property type="taxonomic scope" value="Bacteria"/>
</dbReference>
<dbReference type="HOGENOM" id="CLU_017633_0_7_9"/>
<dbReference type="OrthoDB" id="9779889at2"/>
<dbReference type="Proteomes" id="UP000002145">
    <property type="component" value="Chromosome"/>
</dbReference>
<dbReference type="GO" id="GO:0005737">
    <property type="term" value="C:cytoplasm"/>
    <property type="evidence" value="ECO:0007669"/>
    <property type="project" value="UniProtKB-SubCell"/>
</dbReference>
<dbReference type="GO" id="GO:0005524">
    <property type="term" value="F:ATP binding"/>
    <property type="evidence" value="ECO:0007669"/>
    <property type="project" value="InterPro"/>
</dbReference>
<dbReference type="GO" id="GO:0031072">
    <property type="term" value="F:heat shock protein binding"/>
    <property type="evidence" value="ECO:0007669"/>
    <property type="project" value="InterPro"/>
</dbReference>
<dbReference type="GO" id="GO:0051082">
    <property type="term" value="F:unfolded protein binding"/>
    <property type="evidence" value="ECO:0007669"/>
    <property type="project" value="UniProtKB-UniRule"/>
</dbReference>
<dbReference type="GO" id="GO:0008270">
    <property type="term" value="F:zinc ion binding"/>
    <property type="evidence" value="ECO:0007669"/>
    <property type="project" value="UniProtKB-UniRule"/>
</dbReference>
<dbReference type="GO" id="GO:0051085">
    <property type="term" value="P:chaperone cofactor-dependent protein refolding"/>
    <property type="evidence" value="ECO:0007669"/>
    <property type="project" value="TreeGrafter"/>
</dbReference>
<dbReference type="GO" id="GO:0006260">
    <property type="term" value="P:DNA replication"/>
    <property type="evidence" value="ECO:0007669"/>
    <property type="project" value="UniProtKB-KW"/>
</dbReference>
<dbReference type="GO" id="GO:0042026">
    <property type="term" value="P:protein refolding"/>
    <property type="evidence" value="ECO:0007669"/>
    <property type="project" value="TreeGrafter"/>
</dbReference>
<dbReference type="GO" id="GO:0009408">
    <property type="term" value="P:response to heat"/>
    <property type="evidence" value="ECO:0007669"/>
    <property type="project" value="InterPro"/>
</dbReference>
<dbReference type="CDD" id="cd06257">
    <property type="entry name" value="DnaJ"/>
    <property type="match status" value="1"/>
</dbReference>
<dbReference type="CDD" id="cd10747">
    <property type="entry name" value="DnaJ_C"/>
    <property type="match status" value="1"/>
</dbReference>
<dbReference type="CDD" id="cd10719">
    <property type="entry name" value="DnaJ_zf"/>
    <property type="match status" value="1"/>
</dbReference>
<dbReference type="FunFam" id="1.10.287.110:FF:000034">
    <property type="entry name" value="Chaperone protein DnaJ"/>
    <property type="match status" value="1"/>
</dbReference>
<dbReference type="FunFam" id="2.10.230.10:FF:000002">
    <property type="entry name" value="Molecular chaperone DnaJ"/>
    <property type="match status" value="1"/>
</dbReference>
<dbReference type="FunFam" id="2.60.260.20:FF:000004">
    <property type="entry name" value="Molecular chaperone DnaJ"/>
    <property type="match status" value="1"/>
</dbReference>
<dbReference type="Gene3D" id="1.10.287.110">
    <property type="entry name" value="DnaJ domain"/>
    <property type="match status" value="1"/>
</dbReference>
<dbReference type="Gene3D" id="2.10.230.10">
    <property type="entry name" value="Heat shock protein DnaJ, cysteine-rich domain"/>
    <property type="match status" value="1"/>
</dbReference>
<dbReference type="Gene3D" id="2.60.260.20">
    <property type="entry name" value="Urease metallochaperone UreE, N-terminal domain"/>
    <property type="match status" value="2"/>
</dbReference>
<dbReference type="HAMAP" id="MF_01152">
    <property type="entry name" value="DnaJ"/>
    <property type="match status" value="1"/>
</dbReference>
<dbReference type="InterPro" id="IPR012724">
    <property type="entry name" value="DnaJ"/>
</dbReference>
<dbReference type="InterPro" id="IPR002939">
    <property type="entry name" value="DnaJ_C"/>
</dbReference>
<dbReference type="InterPro" id="IPR001623">
    <property type="entry name" value="DnaJ_domain"/>
</dbReference>
<dbReference type="InterPro" id="IPR018253">
    <property type="entry name" value="DnaJ_domain_CS"/>
</dbReference>
<dbReference type="InterPro" id="IPR008971">
    <property type="entry name" value="HSP40/DnaJ_pept-bd"/>
</dbReference>
<dbReference type="InterPro" id="IPR001305">
    <property type="entry name" value="HSP_DnaJ_Cys-rich_dom"/>
</dbReference>
<dbReference type="InterPro" id="IPR036410">
    <property type="entry name" value="HSP_DnaJ_Cys-rich_dom_sf"/>
</dbReference>
<dbReference type="InterPro" id="IPR036869">
    <property type="entry name" value="J_dom_sf"/>
</dbReference>
<dbReference type="NCBIfam" id="TIGR02349">
    <property type="entry name" value="DnaJ_bact"/>
    <property type="match status" value="1"/>
</dbReference>
<dbReference type="NCBIfam" id="NF008035">
    <property type="entry name" value="PRK10767.1"/>
    <property type="match status" value="1"/>
</dbReference>
<dbReference type="NCBIfam" id="NF010870">
    <property type="entry name" value="PRK14277.1"/>
    <property type="match status" value="1"/>
</dbReference>
<dbReference type="PANTHER" id="PTHR43096:SF48">
    <property type="entry name" value="CHAPERONE PROTEIN DNAJ"/>
    <property type="match status" value="1"/>
</dbReference>
<dbReference type="PANTHER" id="PTHR43096">
    <property type="entry name" value="DNAJ HOMOLOG 1, MITOCHONDRIAL-RELATED"/>
    <property type="match status" value="1"/>
</dbReference>
<dbReference type="Pfam" id="PF00226">
    <property type="entry name" value="DnaJ"/>
    <property type="match status" value="1"/>
</dbReference>
<dbReference type="Pfam" id="PF01556">
    <property type="entry name" value="DnaJ_C"/>
    <property type="match status" value="1"/>
</dbReference>
<dbReference type="Pfam" id="PF00684">
    <property type="entry name" value="DnaJ_CXXCXGXG"/>
    <property type="match status" value="1"/>
</dbReference>
<dbReference type="PRINTS" id="PR00625">
    <property type="entry name" value="JDOMAIN"/>
</dbReference>
<dbReference type="SMART" id="SM00271">
    <property type="entry name" value="DnaJ"/>
    <property type="match status" value="1"/>
</dbReference>
<dbReference type="SUPFAM" id="SSF46565">
    <property type="entry name" value="Chaperone J-domain"/>
    <property type="match status" value="1"/>
</dbReference>
<dbReference type="SUPFAM" id="SSF57938">
    <property type="entry name" value="DnaJ/Hsp40 cysteine-rich domain"/>
    <property type="match status" value="1"/>
</dbReference>
<dbReference type="SUPFAM" id="SSF49493">
    <property type="entry name" value="HSP40/DnaJ peptide-binding domain"/>
    <property type="match status" value="2"/>
</dbReference>
<dbReference type="PROSITE" id="PS00636">
    <property type="entry name" value="DNAJ_1"/>
    <property type="match status" value="1"/>
</dbReference>
<dbReference type="PROSITE" id="PS50076">
    <property type="entry name" value="DNAJ_2"/>
    <property type="match status" value="1"/>
</dbReference>
<dbReference type="PROSITE" id="PS51188">
    <property type="entry name" value="ZF_CR"/>
    <property type="match status" value="1"/>
</dbReference>
<accession>A3DF24</accession>
<evidence type="ECO:0000255" key="1">
    <source>
        <dbReference type="HAMAP-Rule" id="MF_01152"/>
    </source>
</evidence>
<comment type="function">
    <text evidence="1">Participates actively in the response to hyperosmotic and heat shock by preventing the aggregation of stress-denatured proteins and by disaggregating proteins, also in an autonomous, DnaK-independent fashion. Unfolded proteins bind initially to DnaJ; upon interaction with the DnaJ-bound protein, DnaK hydrolyzes its bound ATP, resulting in the formation of a stable complex. GrpE releases ADP from DnaK; ATP binding to DnaK triggers the release of the substrate protein, thus completing the reaction cycle. Several rounds of ATP-dependent interactions between DnaJ, DnaK and GrpE are required for fully efficient folding. Also involved, together with DnaK and GrpE, in the DNA replication of plasmids through activation of initiation proteins.</text>
</comment>
<comment type="cofactor">
    <cofactor evidence="1">
        <name>Zn(2+)</name>
        <dbReference type="ChEBI" id="CHEBI:29105"/>
    </cofactor>
    <text evidence="1">Binds 2 Zn(2+) ions per monomer.</text>
</comment>
<comment type="subunit">
    <text evidence="1">Homodimer.</text>
</comment>
<comment type="subcellular location">
    <subcellularLocation>
        <location evidence="1">Cytoplasm</location>
    </subcellularLocation>
</comment>
<comment type="domain">
    <text evidence="1">The J domain is necessary and sufficient to stimulate DnaK ATPase activity. Zinc center 1 plays an important role in the autonomous, DnaK-independent chaperone activity of DnaJ. Zinc center 2 is essential for interaction with DnaK and for DnaJ activity.</text>
</comment>
<comment type="similarity">
    <text evidence="1">Belongs to the DnaJ family.</text>
</comment>
<gene>
    <name evidence="1" type="primary">dnaJ</name>
    <name type="ordered locus">Cthe_1321</name>
</gene>
<sequence length="386" mass="42087">MAGKRDYYEILGVDRGASDAEIKKAYRKLAKQYHPDMNPGDKAAEAKFKEINEAYEVLSDPQKRARYDQFGHSAFDPNGFGGGGFGGGFTGGFGDFDFGGFGDIFEAFFGSGFGTRTSSARRGPQKGADLKYSMEVSFEEAAFGTEKEVTVSRLEICPTCSGSGTKPGHQPVTCRQCNGTGQVQYKQRTPFGQIVNVRTCDVCHGEGKIITNPCETCGGKGRVRKHTKLKVRIPAGIDNGETISLRGEGEHGIKGGPSGDLFITIKVKPHPIFKRHGNDVNCEIPITFTQAALGAEIEVPTLDGKEKIVIPEGTQTGTVFKLKGKGIPFLRSSGRGDQYVKVNIEVPRKLNEKQKEVLRQFAELVGDEVHEQRKGFFNKMKDALGM</sequence>
<feature type="chain" id="PRO_1000085179" description="Chaperone protein DnaJ">
    <location>
        <begin position="1"/>
        <end position="386"/>
    </location>
</feature>
<feature type="domain" description="J" evidence="1">
    <location>
        <begin position="6"/>
        <end position="71"/>
    </location>
</feature>
<feature type="repeat" description="CXXCXGXG motif">
    <location>
        <begin position="157"/>
        <end position="164"/>
    </location>
</feature>
<feature type="repeat" description="CXXCXGXG motif">
    <location>
        <begin position="174"/>
        <end position="181"/>
    </location>
</feature>
<feature type="repeat" description="CXXCXGXG motif">
    <location>
        <begin position="200"/>
        <end position="207"/>
    </location>
</feature>
<feature type="repeat" description="CXXCXGXG motif">
    <location>
        <begin position="214"/>
        <end position="221"/>
    </location>
</feature>
<feature type="zinc finger region" description="CR-type" evidence="1">
    <location>
        <begin position="144"/>
        <end position="226"/>
    </location>
</feature>
<feature type="binding site" evidence="1">
    <location>
        <position position="157"/>
    </location>
    <ligand>
        <name>Zn(2+)</name>
        <dbReference type="ChEBI" id="CHEBI:29105"/>
        <label>1</label>
    </ligand>
</feature>
<feature type="binding site" evidence="1">
    <location>
        <position position="160"/>
    </location>
    <ligand>
        <name>Zn(2+)</name>
        <dbReference type="ChEBI" id="CHEBI:29105"/>
        <label>1</label>
    </ligand>
</feature>
<feature type="binding site" evidence="1">
    <location>
        <position position="174"/>
    </location>
    <ligand>
        <name>Zn(2+)</name>
        <dbReference type="ChEBI" id="CHEBI:29105"/>
        <label>2</label>
    </ligand>
</feature>
<feature type="binding site" evidence="1">
    <location>
        <position position="177"/>
    </location>
    <ligand>
        <name>Zn(2+)</name>
        <dbReference type="ChEBI" id="CHEBI:29105"/>
        <label>2</label>
    </ligand>
</feature>
<feature type="binding site" evidence="1">
    <location>
        <position position="200"/>
    </location>
    <ligand>
        <name>Zn(2+)</name>
        <dbReference type="ChEBI" id="CHEBI:29105"/>
        <label>2</label>
    </ligand>
</feature>
<feature type="binding site" evidence="1">
    <location>
        <position position="203"/>
    </location>
    <ligand>
        <name>Zn(2+)</name>
        <dbReference type="ChEBI" id="CHEBI:29105"/>
        <label>2</label>
    </ligand>
</feature>
<feature type="binding site" evidence="1">
    <location>
        <position position="214"/>
    </location>
    <ligand>
        <name>Zn(2+)</name>
        <dbReference type="ChEBI" id="CHEBI:29105"/>
        <label>1</label>
    </ligand>
</feature>
<feature type="binding site" evidence="1">
    <location>
        <position position="217"/>
    </location>
    <ligand>
        <name>Zn(2+)</name>
        <dbReference type="ChEBI" id="CHEBI:29105"/>
        <label>1</label>
    </ligand>
</feature>